<sequence>MLGWTLVFLVVAVIAGLLGFTGIAGAAAGIAKIIFFVFIVLLVISLLVNAFRGKSPRL</sequence>
<dbReference type="EMBL" id="CP000891">
    <property type="protein sequence ID" value="ABX48621.1"/>
    <property type="molecule type" value="Genomic_DNA"/>
</dbReference>
<dbReference type="KEGG" id="sbn:Sbal195_1447"/>
<dbReference type="HOGENOM" id="CLU_187346_1_0_6"/>
<dbReference type="Proteomes" id="UP000000770">
    <property type="component" value="Chromosome"/>
</dbReference>
<dbReference type="GO" id="GO:0005886">
    <property type="term" value="C:plasma membrane"/>
    <property type="evidence" value="ECO:0007669"/>
    <property type="project" value="UniProtKB-SubCell"/>
</dbReference>
<dbReference type="HAMAP" id="MF_01361">
    <property type="entry name" value="UPF0391"/>
    <property type="match status" value="1"/>
</dbReference>
<dbReference type="InterPro" id="IPR009760">
    <property type="entry name" value="DUF1328"/>
</dbReference>
<dbReference type="NCBIfam" id="NF010228">
    <property type="entry name" value="PRK13682.1-3"/>
    <property type="match status" value="1"/>
</dbReference>
<dbReference type="NCBIfam" id="NF010229">
    <property type="entry name" value="PRK13682.1-4"/>
    <property type="match status" value="1"/>
</dbReference>
<dbReference type="Pfam" id="PF07043">
    <property type="entry name" value="DUF1328"/>
    <property type="match status" value="1"/>
</dbReference>
<dbReference type="PIRSF" id="PIRSF036466">
    <property type="entry name" value="UCP036466"/>
    <property type="match status" value="1"/>
</dbReference>
<name>Y1447_SHEB9</name>
<protein>
    <recommendedName>
        <fullName evidence="1">UPF0391 membrane protein Sbal195_1447</fullName>
    </recommendedName>
</protein>
<proteinExistence type="inferred from homology"/>
<accession>A9KUH2</accession>
<comment type="subcellular location">
    <subcellularLocation>
        <location evidence="1">Cell membrane</location>
        <topology evidence="1">Multi-pass membrane protein</topology>
    </subcellularLocation>
</comment>
<comment type="similarity">
    <text evidence="1">Belongs to the UPF0391 family.</text>
</comment>
<gene>
    <name type="ordered locus">Sbal195_1447</name>
</gene>
<feature type="chain" id="PRO_1000086964" description="UPF0391 membrane protein Sbal195_1447">
    <location>
        <begin position="1"/>
        <end position="58"/>
    </location>
</feature>
<feature type="transmembrane region" description="Helical" evidence="1">
    <location>
        <begin position="6"/>
        <end position="26"/>
    </location>
</feature>
<feature type="transmembrane region" description="Helical" evidence="1">
    <location>
        <begin position="28"/>
        <end position="48"/>
    </location>
</feature>
<keyword id="KW-1003">Cell membrane</keyword>
<keyword id="KW-0472">Membrane</keyword>
<keyword id="KW-0812">Transmembrane</keyword>
<keyword id="KW-1133">Transmembrane helix</keyword>
<evidence type="ECO:0000255" key="1">
    <source>
        <dbReference type="HAMAP-Rule" id="MF_01361"/>
    </source>
</evidence>
<organism>
    <name type="scientific">Shewanella baltica (strain OS195)</name>
    <dbReference type="NCBI Taxonomy" id="399599"/>
    <lineage>
        <taxon>Bacteria</taxon>
        <taxon>Pseudomonadati</taxon>
        <taxon>Pseudomonadota</taxon>
        <taxon>Gammaproteobacteria</taxon>
        <taxon>Alteromonadales</taxon>
        <taxon>Shewanellaceae</taxon>
        <taxon>Shewanella</taxon>
    </lineage>
</organism>
<reference key="1">
    <citation type="submission" date="2007-11" db="EMBL/GenBank/DDBJ databases">
        <title>Complete sequence of chromosome of Shewanella baltica OS195.</title>
        <authorList>
            <consortium name="US DOE Joint Genome Institute"/>
            <person name="Copeland A."/>
            <person name="Lucas S."/>
            <person name="Lapidus A."/>
            <person name="Barry K."/>
            <person name="Glavina del Rio T."/>
            <person name="Dalin E."/>
            <person name="Tice H."/>
            <person name="Pitluck S."/>
            <person name="Chain P."/>
            <person name="Malfatti S."/>
            <person name="Shin M."/>
            <person name="Vergez L."/>
            <person name="Schmutz J."/>
            <person name="Larimer F."/>
            <person name="Land M."/>
            <person name="Hauser L."/>
            <person name="Kyrpides N."/>
            <person name="Kim E."/>
            <person name="Brettar I."/>
            <person name="Rodrigues J."/>
            <person name="Konstantinidis K."/>
            <person name="Klappenbach J."/>
            <person name="Hofle M."/>
            <person name="Tiedje J."/>
            <person name="Richardson P."/>
        </authorList>
    </citation>
    <scope>NUCLEOTIDE SEQUENCE [LARGE SCALE GENOMIC DNA]</scope>
    <source>
        <strain>OS195</strain>
    </source>
</reference>